<protein>
    <recommendedName>
        <fullName>Endoplasmic reticulum resident protein 29</fullName>
        <shortName>ERp29</shortName>
    </recommendedName>
    <alternativeName>
        <fullName>Endoplasmic reticulum resident protein 31</fullName>
        <shortName>ERp31</shortName>
    </alternativeName>
</protein>
<name>ERP29_RAT</name>
<proteinExistence type="evidence at protein level"/>
<organism>
    <name type="scientific">Rattus norvegicus</name>
    <name type="common">Rat</name>
    <dbReference type="NCBI Taxonomy" id="10116"/>
    <lineage>
        <taxon>Eukaryota</taxon>
        <taxon>Metazoa</taxon>
        <taxon>Chordata</taxon>
        <taxon>Craniata</taxon>
        <taxon>Vertebrata</taxon>
        <taxon>Euteleostomi</taxon>
        <taxon>Mammalia</taxon>
        <taxon>Eutheria</taxon>
        <taxon>Euarchontoglires</taxon>
        <taxon>Glires</taxon>
        <taxon>Rodentia</taxon>
        <taxon>Myomorpha</taxon>
        <taxon>Muroidea</taxon>
        <taxon>Muridae</taxon>
        <taxon>Murinae</taxon>
        <taxon>Rattus</taxon>
    </lineage>
</organism>
<sequence>MAAAVPGAVSLSPLLSVLLGLLLLSAPHGASGLHTKGALPLDTVTFYKVIPKSKFVLVKFDTQYPYGEKQDEFKRLAENSASSDDLLVAEVGISDYGDKLNMELSEKYKLDKESYPVFYLFRDGDFENPVPYSGAVKVGAIQRWLKGQGVYLGMPGCLPAYDALAGQFIEASSREARQAILKQGQDGLSGVKETDKKWASQYLKIMGKILDQGEDFPASELARISKLIENKMSEGKKEELQRSLNILTAFRKKGAEKEEL</sequence>
<dbReference type="EMBL" id="U36482">
    <property type="protein sequence ID" value="AAC15239.1"/>
    <property type="molecule type" value="mRNA"/>
</dbReference>
<dbReference type="EMBL" id="Y10264">
    <property type="protein sequence ID" value="CAA71313.1"/>
    <property type="molecule type" value="mRNA"/>
</dbReference>
<dbReference type="EMBL" id="AY004254">
    <property type="protein sequence ID" value="AAF93170.1"/>
    <property type="molecule type" value="Genomic_DNA"/>
</dbReference>
<dbReference type="EMBL" id="BC091129">
    <property type="protein sequence ID" value="AAH91129.1"/>
    <property type="molecule type" value="mRNA"/>
</dbReference>
<dbReference type="RefSeq" id="NP_446413.1">
    <property type="nucleotide sequence ID" value="NM_053961.2"/>
</dbReference>
<dbReference type="PDB" id="1G7D">
    <property type="method" value="NMR"/>
    <property type="chains" value="A=155-260"/>
</dbReference>
<dbReference type="PDB" id="1G7E">
    <property type="method" value="NMR"/>
    <property type="chains" value="A=33-154"/>
</dbReference>
<dbReference type="PDB" id="2M66">
    <property type="method" value="NMR"/>
    <property type="chains" value="A=155-260"/>
</dbReference>
<dbReference type="PDB" id="6O6I">
    <property type="method" value="NMR"/>
    <property type="chains" value="A=155-260"/>
</dbReference>
<dbReference type="PDBsum" id="1G7D"/>
<dbReference type="PDBsum" id="1G7E"/>
<dbReference type="PDBsum" id="2M66"/>
<dbReference type="PDBsum" id="6O6I"/>
<dbReference type="BMRB" id="P52555"/>
<dbReference type="SMR" id="P52555"/>
<dbReference type="CORUM" id="P52555"/>
<dbReference type="FunCoup" id="P52555">
    <property type="interactions" value="1779"/>
</dbReference>
<dbReference type="IntAct" id="P52555">
    <property type="interactions" value="9"/>
</dbReference>
<dbReference type="STRING" id="10116.ENSRNOP00000001822"/>
<dbReference type="iPTMnet" id="P52555"/>
<dbReference type="PhosphoSitePlus" id="P52555"/>
<dbReference type="SwissPalm" id="P52555"/>
<dbReference type="jPOST" id="P52555"/>
<dbReference type="PaxDb" id="10116-ENSRNOP00000001822"/>
<dbReference type="Ensembl" id="ENSRNOT00000001822.6">
    <property type="protein sequence ID" value="ENSRNOP00000001822.3"/>
    <property type="gene ID" value="ENSRNOG00000001348.6"/>
</dbReference>
<dbReference type="GeneID" id="117030"/>
<dbReference type="KEGG" id="rno:117030"/>
<dbReference type="UCSC" id="RGD:619781">
    <property type="organism name" value="rat"/>
</dbReference>
<dbReference type="AGR" id="RGD:619781"/>
<dbReference type="CTD" id="10961"/>
<dbReference type="RGD" id="619781">
    <property type="gene designation" value="Erp29"/>
</dbReference>
<dbReference type="eggNOG" id="ENOG502QSHC">
    <property type="taxonomic scope" value="Eukaryota"/>
</dbReference>
<dbReference type="GeneTree" id="ENSGT00390000018566"/>
<dbReference type="HOGENOM" id="CLU_061309_1_0_1"/>
<dbReference type="InParanoid" id="P52555"/>
<dbReference type="OMA" id="FPYGDKH"/>
<dbReference type="OrthoDB" id="417262at2759"/>
<dbReference type="PhylomeDB" id="P52555"/>
<dbReference type="EvolutionaryTrace" id="P52555"/>
<dbReference type="PRO" id="PR:P52555"/>
<dbReference type="Proteomes" id="UP000002494">
    <property type="component" value="Chromosome 12"/>
</dbReference>
<dbReference type="Bgee" id="ENSRNOG00000001348">
    <property type="expression patterns" value="Expressed in ovary and 20 other cell types or tissues"/>
</dbReference>
<dbReference type="GO" id="GO:0009986">
    <property type="term" value="C:cell surface"/>
    <property type="evidence" value="ECO:0000266"/>
    <property type="project" value="RGD"/>
</dbReference>
<dbReference type="GO" id="GO:0005783">
    <property type="term" value="C:endoplasmic reticulum"/>
    <property type="evidence" value="ECO:0000266"/>
    <property type="project" value="RGD"/>
</dbReference>
<dbReference type="GO" id="GO:0005788">
    <property type="term" value="C:endoplasmic reticulum lumen"/>
    <property type="evidence" value="ECO:0000304"/>
    <property type="project" value="RGD"/>
</dbReference>
<dbReference type="GO" id="GO:0042470">
    <property type="term" value="C:melanosome"/>
    <property type="evidence" value="ECO:0007669"/>
    <property type="project" value="UniProtKB-SubCell"/>
</dbReference>
<dbReference type="GO" id="GO:0005790">
    <property type="term" value="C:smooth endoplasmic reticulum"/>
    <property type="evidence" value="ECO:0000314"/>
    <property type="project" value="UniProtKB"/>
</dbReference>
<dbReference type="GO" id="GO:0042803">
    <property type="term" value="F:protein homodimerization activity"/>
    <property type="evidence" value="ECO:0000353"/>
    <property type="project" value="ParkinsonsUK-UCL"/>
</dbReference>
<dbReference type="GO" id="GO:0051087">
    <property type="term" value="F:protein-folding chaperone binding"/>
    <property type="evidence" value="ECO:0000353"/>
    <property type="project" value="ParkinsonsUK-UCL"/>
</dbReference>
<dbReference type="GO" id="GO:0006886">
    <property type="term" value="P:intracellular protein transport"/>
    <property type="evidence" value="ECO:0000304"/>
    <property type="project" value="RGD"/>
</dbReference>
<dbReference type="GO" id="GO:0010629">
    <property type="term" value="P:negative regulation of gene expression"/>
    <property type="evidence" value="ECO:0000266"/>
    <property type="project" value="RGD"/>
</dbReference>
<dbReference type="GO" id="GO:0050709">
    <property type="term" value="P:negative regulation of protein secretion"/>
    <property type="evidence" value="ECO:0000266"/>
    <property type="project" value="RGD"/>
</dbReference>
<dbReference type="GO" id="GO:0010628">
    <property type="term" value="P:positive regulation of gene expression"/>
    <property type="evidence" value="ECO:0000266"/>
    <property type="project" value="RGD"/>
</dbReference>
<dbReference type="GO" id="GO:0043410">
    <property type="term" value="P:positive regulation of MAPK cascade"/>
    <property type="evidence" value="ECO:0000266"/>
    <property type="project" value="RGD"/>
</dbReference>
<dbReference type="GO" id="GO:0006457">
    <property type="term" value="P:protein folding"/>
    <property type="evidence" value="ECO:0000304"/>
    <property type="project" value="RGD"/>
</dbReference>
<dbReference type="GO" id="GO:0009306">
    <property type="term" value="P:protein secretion"/>
    <property type="evidence" value="ECO:0007669"/>
    <property type="project" value="InterPro"/>
</dbReference>
<dbReference type="GO" id="GO:1902235">
    <property type="term" value="P:regulation of endoplasmic reticulum stress-induced intrinsic apoptotic signaling pathway"/>
    <property type="evidence" value="ECO:0000266"/>
    <property type="project" value="RGD"/>
</dbReference>
<dbReference type="GO" id="GO:0034976">
    <property type="term" value="P:response to endoplasmic reticulum stress"/>
    <property type="evidence" value="ECO:0000303"/>
    <property type="project" value="ParkinsonsUK-UCL"/>
</dbReference>
<dbReference type="CDD" id="cd00238">
    <property type="entry name" value="ERp29c"/>
    <property type="match status" value="1"/>
</dbReference>
<dbReference type="CDD" id="cd03007">
    <property type="entry name" value="PDI_a_ERp29_N"/>
    <property type="match status" value="1"/>
</dbReference>
<dbReference type="FunFam" id="1.20.1150.12:FF:000001">
    <property type="entry name" value="Endoplasmic reticulum resident protein 29"/>
    <property type="match status" value="1"/>
</dbReference>
<dbReference type="FunFam" id="3.40.30.10:FF:000133">
    <property type="entry name" value="Endoplasmic reticulum resident protein 29"/>
    <property type="match status" value="1"/>
</dbReference>
<dbReference type="Gene3D" id="1.20.1150.12">
    <property type="entry name" value="Endoplasmic reticulum resident protein 29, C-terminal domain"/>
    <property type="match status" value="1"/>
</dbReference>
<dbReference type="Gene3D" id="3.40.30.10">
    <property type="entry name" value="Glutaredoxin"/>
    <property type="match status" value="1"/>
</dbReference>
<dbReference type="InterPro" id="IPR016855">
    <property type="entry name" value="ERp29"/>
</dbReference>
<dbReference type="InterPro" id="IPR011679">
    <property type="entry name" value="ERp29_C"/>
</dbReference>
<dbReference type="InterPro" id="IPR036356">
    <property type="entry name" value="ERp29_C_sf"/>
</dbReference>
<dbReference type="InterPro" id="IPR012883">
    <property type="entry name" value="ERp29_N"/>
</dbReference>
<dbReference type="InterPro" id="IPR036249">
    <property type="entry name" value="Thioredoxin-like_sf"/>
</dbReference>
<dbReference type="PANTHER" id="PTHR12211">
    <property type="entry name" value="ENDOPLASMIC RETICULUM PROTEIN ERP29"/>
    <property type="match status" value="1"/>
</dbReference>
<dbReference type="PANTHER" id="PTHR12211:SF0">
    <property type="entry name" value="ENDOPLASMIC RETICULUM RESIDENT PROTEIN 29"/>
    <property type="match status" value="1"/>
</dbReference>
<dbReference type="Pfam" id="PF07749">
    <property type="entry name" value="ERp29"/>
    <property type="match status" value="1"/>
</dbReference>
<dbReference type="Pfam" id="PF07912">
    <property type="entry name" value="ERp29_N"/>
    <property type="match status" value="1"/>
</dbReference>
<dbReference type="PIRSF" id="PIRSF027352">
    <property type="entry name" value="ER_p29"/>
    <property type="match status" value="1"/>
</dbReference>
<dbReference type="SUPFAM" id="SSF47933">
    <property type="entry name" value="ERP29 C domain-like"/>
    <property type="match status" value="1"/>
</dbReference>
<dbReference type="SUPFAM" id="SSF52833">
    <property type="entry name" value="Thioredoxin-like"/>
    <property type="match status" value="1"/>
</dbReference>
<dbReference type="PROSITE" id="PS00014">
    <property type="entry name" value="ER_TARGET"/>
    <property type="match status" value="1"/>
</dbReference>
<feature type="signal peptide">
    <location>
        <begin position="1"/>
        <end position="32"/>
    </location>
</feature>
<feature type="chain" id="PRO_0000021199" description="Endoplasmic reticulum resident protein 29">
    <location>
        <begin position="33"/>
        <end position="260"/>
    </location>
</feature>
<feature type="short sequence motif" description="Prevents secretion from ER">
    <location>
        <begin position="257"/>
        <end position="260"/>
    </location>
</feature>
<feature type="modified residue" description="Phosphotyrosine; by PKDCC" evidence="2">
    <location>
        <position position="64"/>
    </location>
</feature>
<feature type="modified residue" description="Phosphotyrosine; by PKDCC" evidence="2">
    <location>
        <position position="66"/>
    </location>
</feature>
<feature type="mutagenesis site" description="Loss of function." evidence="3">
    <original>C</original>
    <variation>S</variation>
    <location>
        <position position="157"/>
    </location>
</feature>
<feature type="strand" evidence="5">
    <location>
        <begin position="36"/>
        <end position="38"/>
    </location>
</feature>
<feature type="helix" evidence="5">
    <location>
        <begin position="43"/>
        <end position="49"/>
    </location>
</feature>
<feature type="helix" evidence="5">
    <location>
        <begin position="50"/>
        <end position="52"/>
    </location>
</feature>
<feature type="strand" evidence="5">
    <location>
        <begin position="53"/>
        <end position="61"/>
    </location>
</feature>
<feature type="turn" evidence="5">
    <location>
        <begin position="67"/>
        <end position="70"/>
    </location>
</feature>
<feature type="helix" evidence="5">
    <location>
        <begin position="71"/>
        <end position="79"/>
    </location>
</feature>
<feature type="helix" evidence="5">
    <location>
        <begin position="80"/>
        <end position="82"/>
    </location>
</feature>
<feature type="strand" evidence="5">
    <location>
        <begin position="84"/>
        <end position="93"/>
    </location>
</feature>
<feature type="helix" evidence="5">
    <location>
        <begin position="100"/>
        <end position="108"/>
    </location>
</feature>
<feature type="strand" evidence="5">
    <location>
        <begin position="111"/>
        <end position="114"/>
    </location>
</feature>
<feature type="strand" evidence="5">
    <location>
        <begin position="116"/>
        <end position="124"/>
    </location>
</feature>
<feature type="strand" evidence="5">
    <location>
        <begin position="130"/>
        <end position="134"/>
    </location>
</feature>
<feature type="helix" evidence="5">
    <location>
        <begin position="138"/>
        <end position="146"/>
    </location>
</feature>
<feature type="helix" evidence="4">
    <location>
        <begin position="160"/>
        <end position="170"/>
    </location>
</feature>
<feature type="helix" evidence="4">
    <location>
        <begin position="174"/>
        <end position="187"/>
    </location>
</feature>
<feature type="turn" evidence="4">
    <location>
        <begin position="188"/>
        <end position="190"/>
    </location>
</feature>
<feature type="turn" evidence="4">
    <location>
        <begin position="193"/>
        <end position="195"/>
    </location>
</feature>
<feature type="helix" evidence="4">
    <location>
        <begin position="196"/>
        <end position="211"/>
    </location>
</feature>
<feature type="helix" evidence="4">
    <location>
        <begin position="215"/>
        <end position="229"/>
    </location>
</feature>
<feature type="turn" evidence="4">
    <location>
        <begin position="234"/>
        <end position="236"/>
    </location>
</feature>
<feature type="helix" evidence="4">
    <location>
        <begin position="237"/>
        <end position="249"/>
    </location>
</feature>
<feature type="strand" evidence="4">
    <location>
        <begin position="252"/>
        <end position="254"/>
    </location>
</feature>
<keyword id="KW-0002">3D-structure</keyword>
<keyword id="KW-0903">Direct protein sequencing</keyword>
<keyword id="KW-0256">Endoplasmic reticulum</keyword>
<keyword id="KW-0597">Phosphoprotein</keyword>
<keyword id="KW-1185">Reference proteome</keyword>
<keyword id="KW-0732">Signal</keyword>
<keyword id="KW-0346">Stress response</keyword>
<gene>
    <name type="primary">Erp29</name>
</gene>
<reference key="1">
    <citation type="journal article" date="1998" name="Eur. J. Biochem.">
        <title>A stress-inducible rat liver endoplasmic reticulum protein, ERp29.</title>
        <authorList>
            <person name="Mkrtchian S."/>
            <person name="Fang C."/>
            <person name="Hellman U."/>
            <person name="Ingelman-Sundberg M."/>
        </authorList>
    </citation>
    <scope>NUCLEOTIDE SEQUENCE [MRNA]</scope>
    <source>
        <tissue>Liver</tissue>
    </source>
</reference>
<reference key="2">
    <citation type="journal article" date="1997" name="FEBS Lett.">
        <title>Molecular cloning of ERp29, a novel and widely expressed resident of the endoplasmic reticulum.</title>
        <authorList>
            <person name="Demmer J."/>
            <person name="Zhou C.M."/>
            <person name="Hubbard M.J."/>
        </authorList>
    </citation>
    <scope>NUCLEOTIDE SEQUENCE [MRNA]</scope>
    <scope>PARTIAL PROTEIN SEQUENCE</scope>
    <source>
        <strain>Wistar</strain>
        <tissue>Enamel epithelium</tissue>
        <tissue>Liver</tissue>
    </source>
</reference>
<reference key="3">
    <citation type="submission" date="2000-07" db="EMBL/GenBank/DDBJ databases">
        <title>Genomic organization of the gene encoding rat endoplasmic reticulum protein ERp29.</title>
        <authorList>
            <person name="Mkrtchian S."/>
            <person name="Baryshev M."/>
            <person name="Sharipo A."/>
            <person name="Ingelman-Sundberg M."/>
        </authorList>
    </citation>
    <scope>NUCLEOTIDE SEQUENCE [GENOMIC DNA]</scope>
</reference>
<reference key="4">
    <citation type="journal article" date="2004" name="Genome Res.">
        <title>The status, quality, and expansion of the NIH full-length cDNA project: the Mammalian Gene Collection (MGC).</title>
        <authorList>
            <consortium name="The MGC Project Team"/>
        </authorList>
    </citation>
    <scope>NUCLEOTIDE SEQUENCE [LARGE SCALE MRNA]</scope>
    <source>
        <tissue>Ovary</tissue>
    </source>
</reference>
<reference key="5">
    <citation type="submission" date="2007-04" db="UniProtKB">
        <authorList>
            <person name="Lubec G."/>
            <person name="Chen W.-Q."/>
            <person name="Afjehi-Sadat L."/>
        </authorList>
    </citation>
    <scope>PROTEIN SEQUENCE OF 113-122 AND 209-223</scope>
    <scope>IDENTIFICATION BY MASS SPECTROMETRY</scope>
    <source>
        <strain>Sprague-Dawley</strain>
        <tissue>Hippocampus</tissue>
        <tissue>Spinal cord</tissue>
    </source>
</reference>
<reference key="6">
    <citation type="journal article" date="2000" name="Eur. J. Biochem.">
        <title>Isolation of ERp29, a novel endoplasmic reticulum protein, from rat enamel cells evidence for a unique role in secretory-protein synthesis.</title>
        <authorList>
            <person name="Hubbard M.J."/>
            <person name="McHugh N.J."/>
            <person name="Carne D.L."/>
        </authorList>
    </citation>
    <scope>CHARACTERIZATION</scope>
    <scope>PARTIAL PROTEIN SEQUENCE</scope>
    <source>
        <tissue>Dental pulp</tissue>
        <tissue>Enamel epithelium</tissue>
    </source>
</reference>
<reference key="7">
    <citation type="journal article" date="2002" name="Mol. Biol. Cell">
        <title>A subset of chaperones and folding enzymes form multiprotein complexes in endoplasmic reticulum to bind nascent proteins.</title>
        <authorList>
            <person name="Meunier L."/>
            <person name="Usherwood Y.-K."/>
            <person name="Chung K.T."/>
            <person name="Hendershot L.M."/>
        </authorList>
    </citation>
    <scope>COMPONENT OF A CHAPERONE COMPLEX</scope>
</reference>
<reference key="8">
    <citation type="journal article" date="2005" name="J. Biol. Chem.">
        <title>Biophysical characterization of ERp29: evidence for a key structural role of cysteine-125.</title>
        <authorList>
            <person name="Hermann V.M."/>
            <person name="Cutfield J.F."/>
            <person name="Hubbard M.J."/>
        </authorList>
    </citation>
    <scope>MUTAGENESIS OF CYS-157</scope>
</reference>
<reference key="9">
    <citation type="journal article" date="2001" name="Structure">
        <title>Thioredoxin fold as homodimerization module in the putative chaperone ERp29: NMR structures of the domains and experimental model of the 51 kDa dimer.</title>
        <authorList>
            <person name="Liepinsh E."/>
            <person name="Baryshev M."/>
            <person name="Sharipo A."/>
            <person name="Ingelman-Sundberg M."/>
            <person name="Otting G."/>
            <person name="Mkrtchian S."/>
        </authorList>
    </citation>
    <scope>STRUCTURE BY NMR OF 33-260</scope>
    <scope>SUBUNIT</scope>
</reference>
<evidence type="ECO:0000250" key="1"/>
<evidence type="ECO:0000250" key="2">
    <source>
        <dbReference type="UniProtKB" id="P30040"/>
    </source>
</evidence>
<evidence type="ECO:0000269" key="3">
    <source>
    </source>
</evidence>
<evidence type="ECO:0007829" key="4">
    <source>
        <dbReference type="PDB" id="1G7D"/>
    </source>
</evidence>
<evidence type="ECO:0007829" key="5">
    <source>
        <dbReference type="PDB" id="1G7E"/>
    </source>
</evidence>
<accession>P52555</accession>
<accession>P80749</accession>
<accession>Q5BKC2</accession>
<comment type="function">
    <text>Does not seem to be a disulfide isomerase. Plays an important role in the processing of secretory proteins within the endoplasmic reticulum (ER), possibly by participating in the folding of proteins in the ER.</text>
</comment>
<comment type="subunit">
    <text evidence="1">Homodimer. Part of a large chaperone multiprotein complex comprising CABP1, DNAJB11, HSP90B1, HSPA5, HYOU, PDIA2, PDIA4, PPIB, SDF2L1, UGGT1 and very small amounts of ERP29, but not, or at very low levels, CALR nor CANX (By similarity).</text>
</comment>
<comment type="interaction">
    <interactant intactId="EBI-917740">
        <id>P52555</id>
    </interactant>
    <interactant intactId="EBI-8762218">
        <id>PRO_0000021197</id>
        <label>ERP29</label>
        <dbReference type="UniProtKB" id="P30040"/>
    </interactant>
    <organismsDiffer>true</organismsDiffer>
    <experiments>2</experiments>
</comment>
<comment type="subcellular location">
    <subcellularLocation>
        <location>Endoplasmic reticulum lumen</location>
    </subcellularLocation>
    <subcellularLocation>
        <location evidence="1">Melanosome</location>
    </subcellularLocation>
</comment>
<comment type="tissue specificity">
    <text>Ubiquitous. Mostly expressed in secretory tissues.</text>
</comment>
<comment type="induction">
    <text>By stress.</text>
</comment>